<reference key="1">
    <citation type="journal article" date="2003" name="Microbiology">
        <title>The complete genome sequence of the avian pathogen Mycoplasma gallisepticum strain R(low).</title>
        <authorList>
            <person name="Papazisi L."/>
            <person name="Gorton T.S."/>
            <person name="Kutish G."/>
            <person name="Markham P.F."/>
            <person name="Browning G.F."/>
            <person name="Nguyen D.K."/>
            <person name="Swartzell S."/>
            <person name="Madan A."/>
            <person name="Mahairas G."/>
            <person name="Geary S.J."/>
        </authorList>
    </citation>
    <scope>NUCLEOTIDE SEQUENCE [LARGE SCALE GENOMIC DNA]</scope>
    <source>
        <strain>R(low / passage 15 / clone 2)</strain>
    </source>
</reference>
<feature type="chain" id="PRO_0000177380" description="Large ribosomal subunit protein bL35">
    <location>
        <begin position="1"/>
        <end position="64"/>
    </location>
</feature>
<feature type="region of interest" description="Disordered" evidence="2">
    <location>
        <begin position="1"/>
        <end position="46"/>
    </location>
</feature>
<feature type="compositionally biased region" description="Basic residues" evidence="2">
    <location>
        <begin position="1"/>
        <end position="26"/>
    </location>
</feature>
<gene>
    <name evidence="1" type="primary">rpmI</name>
    <name evidence="1" type="synonym">rpl35</name>
    <name type="ordered locus">MYCGA3580</name>
    <name type="ORF">MGA_1273</name>
</gene>
<organism>
    <name type="scientific">Mycoplasmoides gallisepticum (strain R(low / passage 15 / clone 2))</name>
    <name type="common">Mycoplasma gallisepticum</name>
    <dbReference type="NCBI Taxonomy" id="710127"/>
    <lineage>
        <taxon>Bacteria</taxon>
        <taxon>Bacillati</taxon>
        <taxon>Mycoplasmatota</taxon>
        <taxon>Mycoplasmoidales</taxon>
        <taxon>Mycoplasmoidaceae</taxon>
        <taxon>Mycoplasmoides</taxon>
    </lineage>
</organism>
<accession>Q7NBC1</accession>
<proteinExistence type="inferred from homology"/>
<keyword id="KW-1185">Reference proteome</keyword>
<keyword id="KW-0687">Ribonucleoprotein</keyword>
<keyword id="KW-0689">Ribosomal protein</keyword>
<evidence type="ECO:0000255" key="1">
    <source>
        <dbReference type="HAMAP-Rule" id="MF_00514"/>
    </source>
</evidence>
<evidence type="ECO:0000256" key="2">
    <source>
        <dbReference type="SAM" id="MobiDB-lite"/>
    </source>
</evidence>
<evidence type="ECO:0000305" key="3"/>
<dbReference type="EMBL" id="AE015450">
    <property type="protein sequence ID" value="AAP56708.2"/>
    <property type="molecule type" value="Genomic_DNA"/>
</dbReference>
<dbReference type="RefSeq" id="WP_011113604.1">
    <property type="nucleotide sequence ID" value="NC_004829.2"/>
</dbReference>
<dbReference type="SMR" id="Q7NBC1"/>
<dbReference type="GeneID" id="93510190"/>
<dbReference type="KEGG" id="mga:MGA_1273"/>
<dbReference type="HOGENOM" id="CLU_169643_3_0_14"/>
<dbReference type="OrthoDB" id="47476at2"/>
<dbReference type="Proteomes" id="UP000001418">
    <property type="component" value="Chromosome"/>
</dbReference>
<dbReference type="GO" id="GO:0022625">
    <property type="term" value="C:cytosolic large ribosomal subunit"/>
    <property type="evidence" value="ECO:0007669"/>
    <property type="project" value="TreeGrafter"/>
</dbReference>
<dbReference type="GO" id="GO:0003735">
    <property type="term" value="F:structural constituent of ribosome"/>
    <property type="evidence" value="ECO:0007669"/>
    <property type="project" value="InterPro"/>
</dbReference>
<dbReference type="GO" id="GO:0006412">
    <property type="term" value="P:translation"/>
    <property type="evidence" value="ECO:0007669"/>
    <property type="project" value="UniProtKB-UniRule"/>
</dbReference>
<dbReference type="FunFam" id="4.10.410.60:FF:000001">
    <property type="entry name" value="50S ribosomal protein L35"/>
    <property type="match status" value="1"/>
</dbReference>
<dbReference type="Gene3D" id="4.10.410.60">
    <property type="match status" value="1"/>
</dbReference>
<dbReference type="HAMAP" id="MF_00514">
    <property type="entry name" value="Ribosomal_bL35"/>
    <property type="match status" value="1"/>
</dbReference>
<dbReference type="InterPro" id="IPR001706">
    <property type="entry name" value="Ribosomal_bL35"/>
</dbReference>
<dbReference type="InterPro" id="IPR021137">
    <property type="entry name" value="Ribosomal_bL35-like"/>
</dbReference>
<dbReference type="InterPro" id="IPR018265">
    <property type="entry name" value="Ribosomal_bL35_CS"/>
</dbReference>
<dbReference type="InterPro" id="IPR037229">
    <property type="entry name" value="Ribosomal_bL35_sf"/>
</dbReference>
<dbReference type="NCBIfam" id="TIGR00001">
    <property type="entry name" value="rpmI_bact"/>
    <property type="match status" value="1"/>
</dbReference>
<dbReference type="PANTHER" id="PTHR33343">
    <property type="entry name" value="54S RIBOSOMAL PROTEIN BL35M"/>
    <property type="match status" value="1"/>
</dbReference>
<dbReference type="PANTHER" id="PTHR33343:SF1">
    <property type="entry name" value="LARGE RIBOSOMAL SUBUNIT PROTEIN BL35M"/>
    <property type="match status" value="1"/>
</dbReference>
<dbReference type="Pfam" id="PF01632">
    <property type="entry name" value="Ribosomal_L35p"/>
    <property type="match status" value="1"/>
</dbReference>
<dbReference type="PRINTS" id="PR00064">
    <property type="entry name" value="RIBOSOMALL35"/>
</dbReference>
<dbReference type="SUPFAM" id="SSF143034">
    <property type="entry name" value="L35p-like"/>
    <property type="match status" value="1"/>
</dbReference>
<dbReference type="PROSITE" id="PS00936">
    <property type="entry name" value="RIBOSOMAL_L35"/>
    <property type="match status" value="1"/>
</dbReference>
<comment type="similarity">
    <text evidence="1">Belongs to the bacterial ribosomal protein bL35 family.</text>
</comment>
<protein>
    <recommendedName>
        <fullName evidence="1">Large ribosomal subunit protein bL35</fullName>
    </recommendedName>
    <alternativeName>
        <fullName evidence="3">50S ribosomal protein L35</fullName>
    </alternativeName>
</protein>
<sequence length="64" mass="7433">MPKMKTKSAAAKRFKTTKSGKIKRKQAYTSHLAPNKTTKQKRHLRKDGLVHKTDFKRIKQLIAK</sequence>
<name>RL35_MYCGA</name>